<comment type="function">
    <text evidence="1">Giardins are involved in parasite attachment to the intestinal mucosa and in the cytoskeletal disassembly and reassembly that marks the transition from infectious trophozoite to transmissible cyst. They may interact with other cytoskeletal proteins such as microtubules in the microribbons or crossbridges, to maintain the integrity of the ventral disk (By similarity).</text>
</comment>
<comment type="subcellular location">
    <subcellularLocation>
        <location evidence="1">Cytoplasm</location>
        <location evidence="1">Cytoskeleton</location>
    </subcellularLocation>
</comment>
<comment type="similarity">
    <text evidence="2">Belongs to the annexin family. Giardin subunit alpha subfamily.</text>
</comment>
<accession>Q4VPP7</accession>
<evidence type="ECO:0000250" key="1"/>
<evidence type="ECO:0000255" key="2">
    <source>
        <dbReference type="PROSITE-ProRule" id="PRU01245"/>
    </source>
</evidence>
<feature type="chain" id="PRO_0000288026" description="Giardin subunit alpha-3">
    <location>
        <begin position="1"/>
        <end position="296"/>
    </location>
</feature>
<feature type="repeat" description="Annexin 1" evidence="2">
    <location>
        <begin position="3"/>
        <end position="72"/>
    </location>
</feature>
<feature type="repeat" description="Annexin 2" evidence="2">
    <location>
        <begin position="74"/>
        <end position="146"/>
    </location>
</feature>
<feature type="repeat" description="Annexin 3" evidence="2">
    <location>
        <begin position="153"/>
        <end position="222"/>
    </location>
</feature>
<feature type="repeat" description="Annexin 4" evidence="2">
    <location>
        <begin position="226"/>
        <end position="295"/>
    </location>
</feature>
<name>GIA3_GIAIN</name>
<organism>
    <name type="scientific">Giardia intestinalis</name>
    <name type="common">Giardia lamblia</name>
    <dbReference type="NCBI Taxonomy" id="5741"/>
    <lineage>
        <taxon>Eukaryota</taxon>
        <taxon>Metamonada</taxon>
        <taxon>Diplomonadida</taxon>
        <taxon>Hexamitidae</taxon>
        <taxon>Giardiinae</taxon>
        <taxon>Giardia</taxon>
    </lineage>
</organism>
<keyword id="KW-0041">Annexin</keyword>
<keyword id="KW-0963">Cytoplasm</keyword>
<keyword id="KW-0206">Cytoskeleton</keyword>
<keyword id="KW-0493">Microtubule</keyword>
<keyword id="KW-0677">Repeat</keyword>
<proteinExistence type="inferred from homology"/>
<sequence length="296" mass="33320">MSDTVTKVVADLNAAILQKSARAIAEVACKYSASDREKVRAQYRSTYSIEPDDHINKMLKGGDAATIVSNCWDELPVLRAKHLSKALKGSVDHRALLDLLIMCDREDWNNTVVAFTQQFRKNLPEELEKALKSTTSYRAFYTTWIKFDRAPRNNINGDALKLKEAFSKKDEQTVFDIMSTTVESEYKAIATQFEKVAGMTMIQAFAALTSGPLYWALHTAHYRNIGMNNGAAFLIHHACTADKKGDIARMTRLSPLLCDKCLNAKNYYSEFGDMGKDIVNAFKDAVEEVLKVLWRV</sequence>
<protein>
    <recommendedName>
        <fullName>Giardin subunit alpha-3</fullName>
    </recommendedName>
</protein>
<reference key="1">
    <citation type="journal article" date="2005" name="Int. J. Parasitol.">
        <title>Annexin-like alpha giardins: a new cytoskeletal gene family in Giardia lamblia.</title>
        <authorList>
            <person name="Weiland M.E.-L."/>
            <person name="McArthur A.G."/>
            <person name="Morrison H.G."/>
            <person name="Sogin M.L."/>
            <person name="Svard S.G."/>
        </authorList>
    </citation>
    <scope>NUCLEOTIDE SEQUENCE [GENOMIC DNA]</scope>
    <source>
        <strain>ATCC 50803 / WB-C6</strain>
    </source>
</reference>
<dbReference type="EMBL" id="AY781325">
    <property type="protein sequence ID" value="AAX07976.1"/>
    <property type="molecule type" value="Genomic_DNA"/>
</dbReference>
<dbReference type="RefSeq" id="XP_001708837.1">
    <property type="nucleotide sequence ID" value="XM_001708785.1"/>
</dbReference>
<dbReference type="SMR" id="Q4VPP7"/>
<dbReference type="GeneID" id="5701751"/>
<dbReference type="KEGG" id="gla:GL50803_0011683"/>
<dbReference type="VEuPathDB" id="GiardiaDB:DHA2_11683"/>
<dbReference type="VEuPathDB" id="GiardiaDB:GL50581_4264"/>
<dbReference type="VEuPathDB" id="GiardiaDB:GL50803_0011683"/>
<dbReference type="VEuPathDB" id="GiardiaDB:QR46_1628"/>
<dbReference type="OrthoDB" id="10248562at2759"/>
<dbReference type="GO" id="GO:0005737">
    <property type="term" value="C:cytoplasm"/>
    <property type="evidence" value="ECO:0007669"/>
    <property type="project" value="UniProtKB-KW"/>
</dbReference>
<dbReference type="GO" id="GO:0005874">
    <property type="term" value="C:microtubule"/>
    <property type="evidence" value="ECO:0007669"/>
    <property type="project" value="UniProtKB-KW"/>
</dbReference>
<dbReference type="GO" id="GO:0005886">
    <property type="term" value="C:plasma membrane"/>
    <property type="evidence" value="ECO:0007669"/>
    <property type="project" value="TreeGrafter"/>
</dbReference>
<dbReference type="GO" id="GO:0005509">
    <property type="term" value="F:calcium ion binding"/>
    <property type="evidence" value="ECO:0007669"/>
    <property type="project" value="InterPro"/>
</dbReference>
<dbReference type="GO" id="GO:0005544">
    <property type="term" value="F:calcium-dependent phospholipid binding"/>
    <property type="evidence" value="ECO:0007669"/>
    <property type="project" value="InterPro"/>
</dbReference>
<dbReference type="GO" id="GO:0001786">
    <property type="term" value="F:phosphatidylserine binding"/>
    <property type="evidence" value="ECO:0007669"/>
    <property type="project" value="TreeGrafter"/>
</dbReference>
<dbReference type="GO" id="GO:0007010">
    <property type="term" value="P:cytoskeleton organization"/>
    <property type="evidence" value="ECO:0007669"/>
    <property type="project" value="InterPro"/>
</dbReference>
<dbReference type="Gene3D" id="1.10.220.10">
    <property type="entry name" value="Annexin"/>
    <property type="match status" value="4"/>
</dbReference>
<dbReference type="InterPro" id="IPR008088">
    <property type="entry name" value="Alpha_giardin"/>
</dbReference>
<dbReference type="InterPro" id="IPR018502">
    <property type="entry name" value="Annexin_repeat"/>
</dbReference>
<dbReference type="InterPro" id="IPR037104">
    <property type="entry name" value="Annexin_sf"/>
</dbReference>
<dbReference type="PANTHER" id="PTHR10502">
    <property type="entry name" value="ANNEXIN"/>
    <property type="match status" value="1"/>
</dbReference>
<dbReference type="PANTHER" id="PTHR10502:SF102">
    <property type="entry name" value="ANNEXIN B11"/>
    <property type="match status" value="1"/>
</dbReference>
<dbReference type="Pfam" id="PF22293">
    <property type="entry name" value="ANXE1_4th"/>
    <property type="match status" value="1"/>
</dbReference>
<dbReference type="PRINTS" id="PR01712">
    <property type="entry name" value="ALPHAGIARDIN"/>
</dbReference>
<dbReference type="SUPFAM" id="SSF47874">
    <property type="entry name" value="Annexin"/>
    <property type="match status" value="1"/>
</dbReference>
<dbReference type="PROSITE" id="PS51897">
    <property type="entry name" value="ANNEXIN_2"/>
    <property type="match status" value="4"/>
</dbReference>